<keyword id="KW-0413">Isomerase</keyword>
<keyword id="KW-0460">Magnesium</keyword>
<keyword id="KW-0479">Metal-binding</keyword>
<keyword id="KW-0611">Plant defense</keyword>
<keyword id="KW-1185">Reference proteome</keyword>
<gene>
    <name type="primary">CPS2</name>
    <name type="synonym">CYC2</name>
    <name type="ORF">OsI_007598</name>
</gene>
<feature type="chain" id="PRO_0000372327" description="Ent-copalyl diphosphate synthase 2">
    <location>
        <begin position="1"/>
        <end position="800"/>
    </location>
</feature>
<feature type="region of interest" description="Disordered" evidence="3">
    <location>
        <begin position="52"/>
        <end position="80"/>
    </location>
</feature>
<feature type="short sequence motif" description="DXDD motif">
    <location>
        <begin position="374"/>
        <end position="377"/>
    </location>
</feature>
<feature type="compositionally biased region" description="Basic and acidic residues" evidence="3">
    <location>
        <begin position="55"/>
        <end position="69"/>
    </location>
</feature>
<feature type="binding site" evidence="2">
    <location>
        <position position="242"/>
    </location>
    <ligand>
        <name>substrate</name>
    </ligand>
</feature>
<feature type="binding site" evidence="1">
    <location>
        <position position="374"/>
    </location>
    <ligand>
        <name>Mg(2+)</name>
        <dbReference type="ChEBI" id="CHEBI:18420"/>
    </ligand>
</feature>
<feature type="binding site" evidence="1">
    <location>
        <position position="376"/>
    </location>
    <ligand>
        <name>Mg(2+)</name>
        <dbReference type="ChEBI" id="CHEBI:18420"/>
    </ligand>
</feature>
<feature type="binding site" evidence="2">
    <location>
        <position position="461"/>
    </location>
    <ligand>
        <name>substrate</name>
    </ligand>
</feature>
<organism>
    <name type="scientific">Oryza sativa subsp. indica</name>
    <name type="common">Rice</name>
    <dbReference type="NCBI Taxonomy" id="39946"/>
    <lineage>
        <taxon>Eukaryota</taxon>
        <taxon>Viridiplantae</taxon>
        <taxon>Streptophyta</taxon>
        <taxon>Embryophyta</taxon>
        <taxon>Tracheophyta</taxon>
        <taxon>Spermatophyta</taxon>
        <taxon>Magnoliopsida</taxon>
        <taxon>Liliopsida</taxon>
        <taxon>Poales</taxon>
        <taxon>Poaceae</taxon>
        <taxon>BOP clade</taxon>
        <taxon>Oryzoideae</taxon>
        <taxon>Oryzeae</taxon>
        <taxon>Oryzinae</taxon>
        <taxon>Oryza</taxon>
        <taxon>Oryza sativa</taxon>
    </lineage>
</organism>
<protein>
    <recommendedName>
        <fullName>Ent-copalyl diphosphate synthase 2</fullName>
        <shortName>Ent-CDP synthase 2</shortName>
        <shortName>OsCPS2</shortName>
        <shortName>OsCPS2ent</shortName>
        <ecNumber>5.5.1.13</ecNumber>
    </recommendedName>
    <alternativeName>
        <fullName>Ent-kaurene synthase A</fullName>
    </alternativeName>
    <alternativeName>
        <fullName>OsCyc2</fullName>
    </alternativeName>
</protein>
<sequence length="800" mass="90006">MQMQVLTAASSLPRATLLRPAAAEPWRQSFLQLQARPIQRPGIMLHCKAQLQGQETRERRQLDDDEHARPPQGGDDDVAASTSELPYMIESIKSKLRAARNSLGETTVSAYDTAWIALVNRLDGGGERSPQFPEAIDWIARNQLPDGSWGDAGMFIVQDRLINTLGCVVALATWGVHEEQRARGLAYIQDNLWRLGEDDEEWMMVGFEITFPVLLEKAKNLGLDINYDDPALQDIYAKRQLKLAKIPREALHARPTTLLHSLEGMENLDWERLLQFKCPAGSLHSSPAASAYALSETGDKELLEYLETAINNFDGGAPCTYPVDNFDRLWSVDRLRRLGISRYFTSEIEEYLEYAYRHLSPDGMSYGGLCPVKDIDDTAMAFRLLRLHGYNVSSSVFNHFEKDGEYFCFAGQSSQSLTAMYNSYRASQIVFPGDDDGLEQLRAYCRAFLEERRATGNLRDKWVIANGLPSEVEYALDFPWKASLPRVETRVYLEQYGASEDAWIGKGLYRMTLVNNDLYLEAAKADFTNFQRLSRLEWLSLKRWYIRNNLQAHGVTEQSVLRAYFLAAANIFEPNRAAERLGWARTAILAEAIASHLRQYSANGAADGMTERLISGLASHDWDWRESNDSAARSLLYALDELIDLHAFGNASDSLREAWKQWLMSWTNESQGSTGGDTALLLVRTIEICSGRHGSAEQSLKNSEDYARLEQIASSMCSKLATKILAQNGGSMDNVEGIDQEVDVEMKELIQRVYGSSSNDVSSVTRQTFLDVVKSFCYVAHCSPETIDGHISKVLFEDVN</sequence>
<name>CPS2_ORYSI</name>
<evidence type="ECO:0000250" key="1">
    <source>
        <dbReference type="UniProtKB" id="C7BKP9"/>
    </source>
</evidence>
<evidence type="ECO:0000250" key="2">
    <source>
        <dbReference type="UniProtKB" id="Q38802"/>
    </source>
</evidence>
<evidence type="ECO:0000256" key="3">
    <source>
        <dbReference type="SAM" id="MobiDB-lite"/>
    </source>
</evidence>
<evidence type="ECO:0000269" key="4">
    <source>
    </source>
</evidence>
<evidence type="ECO:0000305" key="5"/>
<proteinExistence type="evidence at transcript level"/>
<accession>Q5MQ85</accession>
<dbReference type="EC" id="5.5.1.13"/>
<dbReference type="EMBL" id="AY602991">
    <property type="protein sequence ID" value="AAT11021.1"/>
    <property type="molecule type" value="mRNA"/>
</dbReference>
<dbReference type="EMBL" id="CM000127">
    <property type="protein sequence ID" value="EAY86365.1"/>
    <property type="molecule type" value="Genomic_DNA"/>
</dbReference>
<dbReference type="SMR" id="Q5MQ85"/>
<dbReference type="STRING" id="39946.Q5MQ85"/>
<dbReference type="EnsemblPlants" id="BGIOSGA008469-TA">
    <property type="protein sequence ID" value="BGIOSGA008469-PA"/>
    <property type="gene ID" value="BGIOSGA008469"/>
</dbReference>
<dbReference type="Gramene" id="BGIOSGA008469-TA">
    <property type="protein sequence ID" value="BGIOSGA008469-PA"/>
    <property type="gene ID" value="BGIOSGA008469"/>
</dbReference>
<dbReference type="HOGENOM" id="CLU_003125_3_2_1"/>
<dbReference type="OMA" id="RDKWVIA"/>
<dbReference type="BRENDA" id="5.5.1.13">
    <property type="organism ID" value="4460"/>
</dbReference>
<dbReference type="Proteomes" id="UP000007015">
    <property type="component" value="Chromosome 2"/>
</dbReference>
<dbReference type="GO" id="GO:0009507">
    <property type="term" value="C:chloroplast"/>
    <property type="evidence" value="ECO:0007669"/>
    <property type="project" value="TreeGrafter"/>
</dbReference>
<dbReference type="GO" id="GO:0009905">
    <property type="term" value="F:ent-copalyl diphosphate synthase activity"/>
    <property type="evidence" value="ECO:0007669"/>
    <property type="project" value="UniProtKB-EC"/>
</dbReference>
<dbReference type="GO" id="GO:0000287">
    <property type="term" value="F:magnesium ion binding"/>
    <property type="evidence" value="ECO:0007669"/>
    <property type="project" value="TreeGrafter"/>
</dbReference>
<dbReference type="GO" id="GO:0010333">
    <property type="term" value="F:terpene synthase activity"/>
    <property type="evidence" value="ECO:0007669"/>
    <property type="project" value="InterPro"/>
</dbReference>
<dbReference type="GO" id="GO:0006952">
    <property type="term" value="P:defense response"/>
    <property type="evidence" value="ECO:0007669"/>
    <property type="project" value="UniProtKB-KW"/>
</dbReference>
<dbReference type="GO" id="GO:0009686">
    <property type="term" value="P:gibberellin biosynthetic process"/>
    <property type="evidence" value="ECO:0007669"/>
    <property type="project" value="TreeGrafter"/>
</dbReference>
<dbReference type="FunFam" id="1.10.600.10:FF:000024">
    <property type="entry name" value="Ent-copalyl diphosphate synthase"/>
    <property type="match status" value="1"/>
</dbReference>
<dbReference type="FunFam" id="1.50.10.160:FF:000001">
    <property type="entry name" value="Ent-copalyl diphosphate synthase"/>
    <property type="match status" value="1"/>
</dbReference>
<dbReference type="FunFam" id="1.50.10.130:FF:000002">
    <property type="entry name" value="Ent-copalyl diphosphate synthase, chloroplastic"/>
    <property type="match status" value="1"/>
</dbReference>
<dbReference type="Gene3D" id="1.50.10.160">
    <property type="match status" value="1"/>
</dbReference>
<dbReference type="Gene3D" id="1.10.600.10">
    <property type="entry name" value="Farnesyl Diphosphate Synthase"/>
    <property type="match status" value="1"/>
</dbReference>
<dbReference type="Gene3D" id="1.50.10.130">
    <property type="entry name" value="Terpene synthase, N-terminal domain"/>
    <property type="match status" value="1"/>
</dbReference>
<dbReference type="InterPro" id="IPR008949">
    <property type="entry name" value="Isoprenoid_synthase_dom_sf"/>
</dbReference>
<dbReference type="InterPro" id="IPR001906">
    <property type="entry name" value="Terpene_synth_N"/>
</dbReference>
<dbReference type="InterPro" id="IPR036965">
    <property type="entry name" value="Terpene_synth_N_sf"/>
</dbReference>
<dbReference type="InterPro" id="IPR050148">
    <property type="entry name" value="Terpene_synthase-like"/>
</dbReference>
<dbReference type="InterPro" id="IPR008930">
    <property type="entry name" value="Terpenoid_cyclase/PrenylTrfase"/>
</dbReference>
<dbReference type="PANTHER" id="PTHR31739">
    <property type="entry name" value="ENT-COPALYL DIPHOSPHATE SYNTHASE, CHLOROPLASTIC"/>
    <property type="match status" value="1"/>
</dbReference>
<dbReference type="PANTHER" id="PTHR31739:SF4">
    <property type="entry name" value="ENT-COPALYL DIPHOSPHATE SYNTHASE, CHLOROPLASTIC"/>
    <property type="match status" value="1"/>
</dbReference>
<dbReference type="Pfam" id="PF01397">
    <property type="entry name" value="Terpene_synth"/>
    <property type="match status" value="1"/>
</dbReference>
<dbReference type="SFLD" id="SFLDG01014">
    <property type="entry name" value="Terpene_Cyclase_Like_1_N-term"/>
    <property type="match status" value="1"/>
</dbReference>
<dbReference type="SFLD" id="SFLDG01605">
    <property type="entry name" value="Terpene_Cyclase_Like_1_N-term"/>
    <property type="match status" value="1"/>
</dbReference>
<dbReference type="SUPFAM" id="SSF48239">
    <property type="entry name" value="Terpenoid cyclases/Protein prenyltransferases"/>
    <property type="match status" value="2"/>
</dbReference>
<dbReference type="SUPFAM" id="SSF48576">
    <property type="entry name" value="Terpenoid synthases"/>
    <property type="match status" value="1"/>
</dbReference>
<reference key="1">
    <citation type="journal article" date="2004" name="Plant Physiol.">
        <title>Rice contains two disparate ent-copalyl diphosphate synthases with distinct metabolic functions.</title>
        <authorList>
            <person name="Prisic S."/>
            <person name="Xu M."/>
            <person name="Wilderman P.R."/>
            <person name="Peters R.J."/>
        </authorList>
    </citation>
    <scope>NUCLEOTIDE SEQUENCE [MRNA]</scope>
    <scope>FUNCTION</scope>
    <scope>INDUCTION</scope>
    <source>
        <strain>cv. IR24</strain>
    </source>
</reference>
<reference key="2">
    <citation type="journal article" date="2005" name="PLoS Biol.">
        <title>The genomes of Oryza sativa: a history of duplications.</title>
        <authorList>
            <person name="Yu J."/>
            <person name="Wang J."/>
            <person name="Lin W."/>
            <person name="Li S."/>
            <person name="Li H."/>
            <person name="Zhou J."/>
            <person name="Ni P."/>
            <person name="Dong W."/>
            <person name="Hu S."/>
            <person name="Zeng C."/>
            <person name="Zhang J."/>
            <person name="Zhang Y."/>
            <person name="Li R."/>
            <person name="Xu Z."/>
            <person name="Li S."/>
            <person name="Li X."/>
            <person name="Zheng H."/>
            <person name="Cong L."/>
            <person name="Lin L."/>
            <person name="Yin J."/>
            <person name="Geng J."/>
            <person name="Li G."/>
            <person name="Shi J."/>
            <person name="Liu J."/>
            <person name="Lv H."/>
            <person name="Li J."/>
            <person name="Wang J."/>
            <person name="Deng Y."/>
            <person name="Ran L."/>
            <person name="Shi X."/>
            <person name="Wang X."/>
            <person name="Wu Q."/>
            <person name="Li C."/>
            <person name="Ren X."/>
            <person name="Wang J."/>
            <person name="Wang X."/>
            <person name="Li D."/>
            <person name="Liu D."/>
            <person name="Zhang X."/>
            <person name="Ji Z."/>
            <person name="Zhao W."/>
            <person name="Sun Y."/>
            <person name="Zhang Z."/>
            <person name="Bao J."/>
            <person name="Han Y."/>
            <person name="Dong L."/>
            <person name="Ji J."/>
            <person name="Chen P."/>
            <person name="Wu S."/>
            <person name="Liu J."/>
            <person name="Xiao Y."/>
            <person name="Bu D."/>
            <person name="Tan J."/>
            <person name="Yang L."/>
            <person name="Ye C."/>
            <person name="Zhang J."/>
            <person name="Xu J."/>
            <person name="Zhou Y."/>
            <person name="Yu Y."/>
            <person name="Zhang B."/>
            <person name="Zhuang S."/>
            <person name="Wei H."/>
            <person name="Liu B."/>
            <person name="Lei M."/>
            <person name="Yu H."/>
            <person name="Li Y."/>
            <person name="Xu H."/>
            <person name="Wei S."/>
            <person name="He X."/>
            <person name="Fang L."/>
            <person name="Zhang Z."/>
            <person name="Zhang Y."/>
            <person name="Huang X."/>
            <person name="Su Z."/>
            <person name="Tong W."/>
            <person name="Li J."/>
            <person name="Tong Z."/>
            <person name="Li S."/>
            <person name="Ye J."/>
            <person name="Wang L."/>
            <person name="Fang L."/>
            <person name="Lei T."/>
            <person name="Chen C.-S."/>
            <person name="Chen H.-C."/>
            <person name="Xu Z."/>
            <person name="Li H."/>
            <person name="Huang H."/>
            <person name="Zhang F."/>
            <person name="Xu H."/>
            <person name="Li N."/>
            <person name="Zhao C."/>
            <person name="Li S."/>
            <person name="Dong L."/>
            <person name="Huang Y."/>
            <person name="Li L."/>
            <person name="Xi Y."/>
            <person name="Qi Q."/>
            <person name="Li W."/>
            <person name="Zhang B."/>
            <person name="Hu W."/>
            <person name="Zhang Y."/>
            <person name="Tian X."/>
            <person name="Jiao Y."/>
            <person name="Liang X."/>
            <person name="Jin J."/>
            <person name="Gao L."/>
            <person name="Zheng W."/>
            <person name="Hao B."/>
            <person name="Liu S.-M."/>
            <person name="Wang W."/>
            <person name="Yuan L."/>
            <person name="Cao M."/>
            <person name="McDermott J."/>
            <person name="Samudrala R."/>
            <person name="Wang J."/>
            <person name="Wong G.K.-S."/>
            <person name="Yang H."/>
        </authorList>
    </citation>
    <scope>NUCLEOTIDE SEQUENCE [LARGE SCALE GENOMIC DNA]</scope>
    <source>
        <strain>cv. 93-11</strain>
    </source>
</reference>
<comment type="function">
    <text evidence="4">Catalyzes the conversion of geranylgeranyl diphosphate to the phytoalexin precursor ent-copalyl diphosphate.</text>
</comment>
<comment type="catalytic activity">
    <reaction>
        <text>(2E,6E,10E)-geranylgeranyl diphosphate = ent-copalyl diphosphate</text>
        <dbReference type="Rhea" id="RHEA:14841"/>
        <dbReference type="ChEBI" id="CHEBI:58553"/>
        <dbReference type="ChEBI" id="CHEBI:58756"/>
        <dbReference type="EC" id="5.5.1.13"/>
    </reaction>
</comment>
<comment type="cofactor">
    <cofactor evidence="5">
        <name>Mg(2+)</name>
        <dbReference type="ChEBI" id="CHEBI:18420"/>
    </cofactor>
</comment>
<comment type="induction">
    <text evidence="4">By UV irradiation.</text>
</comment>
<comment type="domain">
    <text>The Asp-Xaa-Asp-Asp (DXDD) motif is important for the catalytic activity, presumably through binding to Mg(2+).</text>
</comment>
<comment type="miscellaneous">
    <text>2 different ent-CDP synthases exist in rice, one being involved in gibberellin biosynthesis and the other in phytoalexins biosynthesis. Phytoalexins are diterpenoid secondary metabolites involved in the defense mechanism of the plant and produced in response to attack (by a pathogen, elicitor or UV irradiation).</text>
</comment>
<comment type="similarity">
    <text evidence="5">Belongs to the terpene synthase family.</text>
</comment>